<dbReference type="EMBL" id="BC070648">
    <property type="protein sequence ID" value="AAH70648.1"/>
    <property type="molecule type" value="mRNA"/>
</dbReference>
<dbReference type="RefSeq" id="NP_001084958.1">
    <property type="nucleotide sequence ID" value="NM_001091489.1"/>
</dbReference>
<dbReference type="SMR" id="Q6IRQ5"/>
<dbReference type="GeneID" id="432016"/>
<dbReference type="KEGG" id="xla:432016"/>
<dbReference type="AGR" id="Xenbase:XB-GENE-6256297"/>
<dbReference type="CTD" id="432016"/>
<dbReference type="Xenbase" id="XB-GENE-6256297">
    <property type="gene designation" value="septin8.S"/>
</dbReference>
<dbReference type="OrthoDB" id="416553at2759"/>
<dbReference type="Proteomes" id="UP000186698">
    <property type="component" value="Chromosome 3S"/>
</dbReference>
<dbReference type="Bgee" id="432016">
    <property type="expression patterns" value="Expressed in internal ear and 19 other cell types or tissues"/>
</dbReference>
<dbReference type="GO" id="GO:0032153">
    <property type="term" value="C:cell division site"/>
    <property type="evidence" value="ECO:0000318"/>
    <property type="project" value="GO_Central"/>
</dbReference>
<dbReference type="GO" id="GO:0015630">
    <property type="term" value="C:microtubule cytoskeleton"/>
    <property type="evidence" value="ECO:0000318"/>
    <property type="project" value="GO_Central"/>
</dbReference>
<dbReference type="GO" id="GO:0031105">
    <property type="term" value="C:septin complex"/>
    <property type="evidence" value="ECO:0000318"/>
    <property type="project" value="GO_Central"/>
</dbReference>
<dbReference type="GO" id="GO:0005940">
    <property type="term" value="C:septin ring"/>
    <property type="evidence" value="ECO:0000318"/>
    <property type="project" value="GO_Central"/>
</dbReference>
<dbReference type="GO" id="GO:0005525">
    <property type="term" value="F:GTP binding"/>
    <property type="evidence" value="ECO:0007669"/>
    <property type="project" value="UniProtKB-KW"/>
</dbReference>
<dbReference type="GO" id="GO:0003924">
    <property type="term" value="F:GTPase activity"/>
    <property type="evidence" value="ECO:0000318"/>
    <property type="project" value="GO_Central"/>
</dbReference>
<dbReference type="GO" id="GO:0060090">
    <property type="term" value="F:molecular adaptor activity"/>
    <property type="evidence" value="ECO:0000318"/>
    <property type="project" value="GO_Central"/>
</dbReference>
<dbReference type="GO" id="GO:0061640">
    <property type="term" value="P:cytoskeleton-dependent cytokinesis"/>
    <property type="evidence" value="ECO:0000318"/>
    <property type="project" value="GO_Central"/>
</dbReference>
<dbReference type="GO" id="GO:0008104">
    <property type="term" value="P:protein localization"/>
    <property type="evidence" value="ECO:0000318"/>
    <property type="project" value="GO_Central"/>
</dbReference>
<dbReference type="CDD" id="cd01850">
    <property type="entry name" value="CDC_Septin"/>
    <property type="match status" value="1"/>
</dbReference>
<dbReference type="FunFam" id="3.40.50.300:FF:000036">
    <property type="entry name" value="septin-6 isoform X2"/>
    <property type="match status" value="1"/>
</dbReference>
<dbReference type="Gene3D" id="3.40.50.300">
    <property type="entry name" value="P-loop containing nucleotide triphosphate hydrolases"/>
    <property type="match status" value="1"/>
</dbReference>
<dbReference type="InterPro" id="IPR030379">
    <property type="entry name" value="G_SEPTIN_dom"/>
</dbReference>
<dbReference type="InterPro" id="IPR027417">
    <property type="entry name" value="P-loop_NTPase"/>
</dbReference>
<dbReference type="InterPro" id="IPR016491">
    <property type="entry name" value="Septin"/>
</dbReference>
<dbReference type="PANTHER" id="PTHR18884">
    <property type="entry name" value="SEPTIN"/>
    <property type="match status" value="1"/>
</dbReference>
<dbReference type="Pfam" id="PF00735">
    <property type="entry name" value="Septin"/>
    <property type="match status" value="1"/>
</dbReference>
<dbReference type="PIRSF" id="PIRSF006698">
    <property type="entry name" value="Septin"/>
    <property type="match status" value="1"/>
</dbReference>
<dbReference type="SUPFAM" id="SSF52540">
    <property type="entry name" value="P-loop containing nucleoside triphosphate hydrolases"/>
    <property type="match status" value="1"/>
</dbReference>
<dbReference type="PROSITE" id="PS51719">
    <property type="entry name" value="G_SEPTIN"/>
    <property type="match status" value="1"/>
</dbReference>
<reference key="1">
    <citation type="submission" date="2004-05" db="EMBL/GenBank/DDBJ databases">
        <authorList>
            <consortium name="NIH - Xenopus Gene Collection (XGC) project"/>
        </authorList>
    </citation>
    <scope>NUCLEOTIDE SEQUENCE [LARGE SCALE MRNA]</scope>
    <source>
        <tissue>Embryo</tissue>
    </source>
</reference>
<gene>
    <name type="primary">sept8-b</name>
</gene>
<accession>Q6IRQ5</accession>
<organism>
    <name type="scientific">Xenopus laevis</name>
    <name type="common">African clawed frog</name>
    <dbReference type="NCBI Taxonomy" id="8355"/>
    <lineage>
        <taxon>Eukaryota</taxon>
        <taxon>Metazoa</taxon>
        <taxon>Chordata</taxon>
        <taxon>Craniata</taxon>
        <taxon>Vertebrata</taxon>
        <taxon>Euteleostomi</taxon>
        <taxon>Amphibia</taxon>
        <taxon>Batrachia</taxon>
        <taxon>Anura</taxon>
        <taxon>Pipoidea</taxon>
        <taxon>Pipidae</taxon>
        <taxon>Xenopodinae</taxon>
        <taxon>Xenopus</taxon>
        <taxon>Xenopus</taxon>
    </lineage>
</organism>
<sequence>MAATDVERASNEEKRSLALSGHVGFDSLPDQLVGKSVTQGFCFNILCVGETGIGKSTLMNTLFNTTFETEEASHYENGVRLRPRTYELQESNVHLKLTIVDTVGFGDQINKDDSYRSVVDYIDTQFETYLQEELKIRRSLFNYHDSRIHVCLYFITPTGHSLKSLDLVAMKKLDSKVNIIPIIAKADTISKSELHKFKIKIMSELVSNGVQIYQFPTDDDAVAEINSVMNAHLPFAVVGSTEEVKVGNKLVRARQYPWGVVQVENESHCDFVKLREMLIRVNMEDLREQTHTRHYELYRRCKLEEMGFKDNDPDTQPFSLQETYEAKRKEFLSELQKKEEEMRQMFVNKVKETESELKERERELQEKFMQLKRIHQEESKKVEDKRRDLEEEMNAFNRRKVAMETLQSQSFQATSQQPLKKDKDRKN</sequence>
<feature type="chain" id="PRO_0000363232" description="Septin-8-B">
    <location>
        <begin position="1"/>
        <end position="427"/>
    </location>
</feature>
<feature type="domain" description="Septin-type G" evidence="3">
    <location>
        <begin position="39"/>
        <end position="305"/>
    </location>
</feature>
<feature type="region of interest" description="G1 motif" evidence="3">
    <location>
        <begin position="49"/>
        <end position="56"/>
    </location>
</feature>
<feature type="region of interest" description="G3 motif" evidence="3">
    <location>
        <begin position="101"/>
        <end position="104"/>
    </location>
</feature>
<feature type="region of interest" description="G4 motif" evidence="3">
    <location>
        <begin position="184"/>
        <end position="187"/>
    </location>
</feature>
<feature type="region of interest" description="Disordered" evidence="4">
    <location>
        <begin position="406"/>
        <end position="427"/>
    </location>
</feature>
<feature type="coiled-coil region" evidence="2">
    <location>
        <begin position="320"/>
        <end position="407"/>
    </location>
</feature>
<feature type="compositionally biased region" description="Polar residues" evidence="4">
    <location>
        <begin position="406"/>
        <end position="418"/>
    </location>
</feature>
<feature type="binding site" evidence="1">
    <location>
        <begin position="49"/>
        <end position="56"/>
    </location>
    <ligand>
        <name>GTP</name>
        <dbReference type="ChEBI" id="CHEBI:37565"/>
    </ligand>
</feature>
<feature type="binding site" evidence="1">
    <location>
        <position position="104"/>
    </location>
    <ligand>
        <name>GTP</name>
        <dbReference type="ChEBI" id="CHEBI:37565"/>
    </ligand>
</feature>
<feature type="binding site" evidence="1">
    <location>
        <begin position="185"/>
        <end position="193"/>
    </location>
    <ligand>
        <name>GTP</name>
        <dbReference type="ChEBI" id="CHEBI:37565"/>
    </ligand>
</feature>
<feature type="binding site" evidence="1">
    <location>
        <position position="239"/>
    </location>
    <ligand>
        <name>GTP</name>
        <dbReference type="ChEBI" id="CHEBI:37565"/>
    </ligand>
</feature>
<feature type="binding site" evidence="1">
    <location>
        <position position="254"/>
    </location>
    <ligand>
        <name>GTP</name>
        <dbReference type="ChEBI" id="CHEBI:37565"/>
    </ligand>
</feature>
<protein>
    <recommendedName>
        <fullName>Septin-8-B</fullName>
    </recommendedName>
</protein>
<proteinExistence type="evidence at transcript level"/>
<comment type="similarity">
    <text evidence="3">Belongs to the TRAFAC class TrmE-Era-EngA-EngB-Septin-like GTPase superfamily. Septin GTPase family.</text>
</comment>
<evidence type="ECO:0000250" key="1"/>
<evidence type="ECO:0000255" key="2"/>
<evidence type="ECO:0000255" key="3">
    <source>
        <dbReference type="PROSITE-ProRule" id="PRU01056"/>
    </source>
</evidence>
<evidence type="ECO:0000256" key="4">
    <source>
        <dbReference type="SAM" id="MobiDB-lite"/>
    </source>
</evidence>
<name>SEP8B_XENLA</name>
<keyword id="KW-0175">Coiled coil</keyword>
<keyword id="KW-0342">GTP-binding</keyword>
<keyword id="KW-0547">Nucleotide-binding</keyword>
<keyword id="KW-1185">Reference proteome</keyword>